<name>PCRB_GEOSW</name>
<comment type="function">
    <text evidence="1">Prenyltransferase that catalyzes in vivo the transfer of the heptaprenyl moiety of heptaprenyl pyrophosphate (HepPP; 35 carbon atoms) to the C3 hydroxyl of sn-glycerol-1-phosphate (G1P), producing heptaprenylglyceryl phosphate (HepGP). This reaction is an ether-bond-formation step in the biosynthesis of archaea-type G1P-based membrane lipids found in Bacillales.</text>
</comment>
<comment type="catalytic activity">
    <reaction evidence="1">
        <text>sn-glycerol 1-phosphate + all-trans-heptaprenyl diphosphate = 3-heptaprenyl-sn-glycero-1-phosphate + diphosphate</text>
        <dbReference type="Rhea" id="RHEA:33495"/>
        <dbReference type="ChEBI" id="CHEBI:33019"/>
        <dbReference type="ChEBI" id="CHEBI:57685"/>
        <dbReference type="ChEBI" id="CHEBI:58206"/>
        <dbReference type="ChEBI" id="CHEBI:64781"/>
        <dbReference type="EC" id="2.5.1.n9"/>
    </reaction>
</comment>
<comment type="cofactor">
    <cofactor evidence="1">
        <name>Mg(2+)</name>
        <dbReference type="ChEBI" id="CHEBI:18420"/>
    </cofactor>
</comment>
<comment type="pathway">
    <text evidence="1">Membrane lipid metabolism; glycerophospholipid metabolism.</text>
</comment>
<comment type="subunit">
    <text evidence="1">Homodimer.</text>
</comment>
<comment type="similarity">
    <text evidence="1">Belongs to the GGGP/HepGP synthase family. Group I subfamily.</text>
</comment>
<accession>C5D4J0</accession>
<sequence>MYDIRQWRHVFKLDPNKGISDEQLERICESGTDAVIVGGTDDVTLENVLELLARIRRFSVPCVLEISNLESVTPGFDFYFVPMVLNSREKKWIIDLHHEAVKQFGDIMNWDEIFMEGYCILHKNCKAAMLTDANTELQEDDVVAYARIAEHMYRLPIFYLEYSGSYGNPELVQRVKQVLKQTQLFYGGGIETEKQAKEMAQYADTIVVGNVIYEDIKKALATVKAVKQ</sequence>
<protein>
    <recommendedName>
        <fullName evidence="1">Heptaprenylglyceryl phosphate synthase</fullName>
        <shortName evidence="1">HepGP synthase</shortName>
        <ecNumber evidence="1">2.5.1.n9</ecNumber>
    </recommendedName>
    <alternativeName>
        <fullName evidence="1">Glycerol-1-phosphate heptaprenyltransferase</fullName>
    </alternativeName>
</protein>
<keyword id="KW-0444">Lipid biosynthesis</keyword>
<keyword id="KW-0443">Lipid metabolism</keyword>
<keyword id="KW-0460">Magnesium</keyword>
<keyword id="KW-0479">Metal-binding</keyword>
<keyword id="KW-0594">Phospholipid biosynthesis</keyword>
<keyword id="KW-1208">Phospholipid metabolism</keyword>
<keyword id="KW-0808">Transferase</keyword>
<gene>
    <name evidence="1" type="primary">pcrB</name>
    <name type="ordered locus">GWCH70_0269</name>
</gene>
<feature type="chain" id="PRO_1000202939" description="Heptaprenylglyceryl phosphate synthase">
    <location>
        <begin position="1"/>
        <end position="228"/>
    </location>
</feature>
<feature type="binding site" evidence="1">
    <location>
        <position position="12"/>
    </location>
    <ligand>
        <name>sn-glycerol 1-phosphate</name>
        <dbReference type="ChEBI" id="CHEBI:57685"/>
    </ligand>
</feature>
<feature type="binding site" evidence="1">
    <location>
        <position position="14"/>
    </location>
    <ligand>
        <name>Mg(2+)</name>
        <dbReference type="ChEBI" id="CHEBI:18420"/>
    </ligand>
</feature>
<feature type="binding site" evidence="1">
    <location>
        <position position="40"/>
    </location>
    <ligand>
        <name>Mg(2+)</name>
        <dbReference type="ChEBI" id="CHEBI:18420"/>
    </ligand>
</feature>
<feature type="binding site" evidence="1">
    <location>
        <begin position="159"/>
        <end position="164"/>
    </location>
    <ligand>
        <name>sn-glycerol 1-phosphate</name>
        <dbReference type="ChEBI" id="CHEBI:57685"/>
    </ligand>
</feature>
<feature type="binding site" evidence="1">
    <location>
        <position position="189"/>
    </location>
    <ligand>
        <name>sn-glycerol 1-phosphate</name>
        <dbReference type="ChEBI" id="CHEBI:57685"/>
    </ligand>
</feature>
<feature type="binding site" evidence="1">
    <location>
        <begin position="209"/>
        <end position="210"/>
    </location>
    <ligand>
        <name>sn-glycerol 1-phosphate</name>
        <dbReference type="ChEBI" id="CHEBI:57685"/>
    </ligand>
</feature>
<proteinExistence type="inferred from homology"/>
<evidence type="ECO:0000255" key="1">
    <source>
        <dbReference type="HAMAP-Rule" id="MF_00112"/>
    </source>
</evidence>
<reference key="1">
    <citation type="submission" date="2009-06" db="EMBL/GenBank/DDBJ databases">
        <title>Complete sequence of chromosome of Geopacillus sp. WCH70.</title>
        <authorList>
            <consortium name="US DOE Joint Genome Institute"/>
            <person name="Lucas S."/>
            <person name="Copeland A."/>
            <person name="Lapidus A."/>
            <person name="Glavina del Rio T."/>
            <person name="Dalin E."/>
            <person name="Tice H."/>
            <person name="Bruce D."/>
            <person name="Goodwin L."/>
            <person name="Pitluck S."/>
            <person name="Chertkov O."/>
            <person name="Brettin T."/>
            <person name="Detter J.C."/>
            <person name="Han C."/>
            <person name="Larimer F."/>
            <person name="Land M."/>
            <person name="Hauser L."/>
            <person name="Kyrpides N."/>
            <person name="Mikhailova N."/>
            <person name="Brumm P."/>
            <person name="Mead D.A."/>
            <person name="Richardson P."/>
        </authorList>
    </citation>
    <scope>NUCLEOTIDE SEQUENCE [LARGE SCALE GENOMIC DNA]</scope>
    <source>
        <strain>WCH70</strain>
    </source>
</reference>
<dbReference type="EC" id="2.5.1.n9" evidence="1"/>
<dbReference type="EMBL" id="CP001638">
    <property type="protein sequence ID" value="ACS23198.1"/>
    <property type="molecule type" value="Genomic_DNA"/>
</dbReference>
<dbReference type="SMR" id="C5D4J0"/>
<dbReference type="STRING" id="471223.GWCH70_0269"/>
<dbReference type="KEGG" id="gwc:GWCH70_0269"/>
<dbReference type="eggNOG" id="COG1646">
    <property type="taxonomic scope" value="Bacteria"/>
</dbReference>
<dbReference type="HOGENOM" id="CLU_095211_0_0_9"/>
<dbReference type="OrthoDB" id="2381757at2"/>
<dbReference type="UniPathway" id="UPA00940"/>
<dbReference type="GO" id="GO:0120536">
    <property type="term" value="F:heptaprenylglyceryl phosphate synthase activity"/>
    <property type="evidence" value="ECO:0007669"/>
    <property type="project" value="RHEA"/>
</dbReference>
<dbReference type="GO" id="GO:0000287">
    <property type="term" value="F:magnesium ion binding"/>
    <property type="evidence" value="ECO:0007669"/>
    <property type="project" value="UniProtKB-UniRule"/>
</dbReference>
<dbReference type="GO" id="GO:0046474">
    <property type="term" value="P:glycerophospholipid biosynthetic process"/>
    <property type="evidence" value="ECO:0007669"/>
    <property type="project" value="UniProtKB-UniRule"/>
</dbReference>
<dbReference type="CDD" id="cd02812">
    <property type="entry name" value="PcrB_like"/>
    <property type="match status" value="1"/>
</dbReference>
<dbReference type="FunFam" id="3.20.20.390:FF:000001">
    <property type="entry name" value="Heptaprenylglyceryl phosphate synthase"/>
    <property type="match status" value="1"/>
</dbReference>
<dbReference type="Gene3D" id="3.20.20.390">
    <property type="entry name" value="FMN-linked oxidoreductases"/>
    <property type="match status" value="1"/>
</dbReference>
<dbReference type="HAMAP" id="MF_00112">
    <property type="entry name" value="GGGP_HepGP_synthase"/>
    <property type="match status" value="1"/>
</dbReference>
<dbReference type="InterPro" id="IPR039074">
    <property type="entry name" value="GGGP/HepGP_synthase_I"/>
</dbReference>
<dbReference type="InterPro" id="IPR038597">
    <property type="entry name" value="GGGP/HepGP_synthase_sf"/>
</dbReference>
<dbReference type="InterPro" id="IPR008205">
    <property type="entry name" value="GGGP_HepGP_synthase"/>
</dbReference>
<dbReference type="NCBIfam" id="TIGR01768">
    <property type="entry name" value="GGGP-family"/>
    <property type="match status" value="1"/>
</dbReference>
<dbReference type="NCBIfam" id="NF003197">
    <property type="entry name" value="PRK04169.1-1"/>
    <property type="match status" value="1"/>
</dbReference>
<dbReference type="NCBIfam" id="NF003199">
    <property type="entry name" value="PRK04169.1-3"/>
    <property type="match status" value="1"/>
</dbReference>
<dbReference type="PANTHER" id="PTHR40029">
    <property type="match status" value="1"/>
</dbReference>
<dbReference type="PANTHER" id="PTHR40029:SF2">
    <property type="entry name" value="HEPTAPRENYLGLYCERYL PHOSPHATE SYNTHASE"/>
    <property type="match status" value="1"/>
</dbReference>
<dbReference type="Pfam" id="PF01884">
    <property type="entry name" value="PcrB"/>
    <property type="match status" value="1"/>
</dbReference>
<dbReference type="SUPFAM" id="SSF51395">
    <property type="entry name" value="FMN-linked oxidoreductases"/>
    <property type="match status" value="1"/>
</dbReference>
<organism>
    <name type="scientific">Geobacillus sp. (strain WCH70)</name>
    <dbReference type="NCBI Taxonomy" id="471223"/>
    <lineage>
        <taxon>Bacteria</taxon>
        <taxon>Bacillati</taxon>
        <taxon>Bacillota</taxon>
        <taxon>Bacilli</taxon>
        <taxon>Bacillales</taxon>
        <taxon>Anoxybacillaceae</taxon>
        <taxon>Geobacillus</taxon>
    </lineage>
</organism>